<organism>
    <name type="scientific">Acinetobacter baumannii (strain ATCC 17978 / DSM 105126 / CIP 53.77 / LMG 1025 / NCDC KC755 / 5377)</name>
    <dbReference type="NCBI Taxonomy" id="400667"/>
    <lineage>
        <taxon>Bacteria</taxon>
        <taxon>Pseudomonadati</taxon>
        <taxon>Pseudomonadota</taxon>
        <taxon>Gammaproteobacteria</taxon>
        <taxon>Moraxellales</taxon>
        <taxon>Moraxellaceae</taxon>
        <taxon>Acinetobacter</taxon>
        <taxon>Acinetobacter calcoaceticus/baumannii complex</taxon>
    </lineage>
</organism>
<protein>
    <recommendedName>
        <fullName evidence="1">Uridylate kinase</fullName>
        <shortName evidence="1">UK</shortName>
        <ecNumber evidence="1">2.7.4.22</ecNumber>
    </recommendedName>
    <alternativeName>
        <fullName evidence="1">Uridine monophosphate kinase</fullName>
        <shortName evidence="1">UMP kinase</shortName>
        <shortName evidence="1">UMPK</shortName>
    </alternativeName>
</protein>
<sequence>MAETISPRYSRILLKLSGEALSGNKDMGIDAQVLDQMSLSIAHLVGLGVQVGIVVGGGNLYRGSQLQKDGLVGRVTGDQMGMLATVMNGLAMRDALVRRNIRTRLMSALPIGTVVESYSSRDAIRHLSQGEVCVFVAGTGNPFFTTDTAACLRGIEIEANLILKATKVDGVYNKDPSKYEDAVKYDHLTFDQVLDEKLGVMDLTAICLCRDHNVPLQVFDMNKSGALLSVVMGEKEGTRVTK</sequence>
<comment type="function">
    <text evidence="1">Catalyzes the reversible phosphorylation of UMP to UDP.</text>
</comment>
<comment type="catalytic activity">
    <reaction evidence="1">
        <text>UMP + ATP = UDP + ADP</text>
        <dbReference type="Rhea" id="RHEA:24400"/>
        <dbReference type="ChEBI" id="CHEBI:30616"/>
        <dbReference type="ChEBI" id="CHEBI:57865"/>
        <dbReference type="ChEBI" id="CHEBI:58223"/>
        <dbReference type="ChEBI" id="CHEBI:456216"/>
        <dbReference type="EC" id="2.7.4.22"/>
    </reaction>
</comment>
<comment type="activity regulation">
    <text evidence="1">Inhibited by UTP.</text>
</comment>
<comment type="pathway">
    <text evidence="1">Pyrimidine metabolism; CTP biosynthesis via de novo pathway; UDP from UMP (UMPK route): step 1/1.</text>
</comment>
<comment type="subunit">
    <text evidence="1">Homohexamer.</text>
</comment>
<comment type="subcellular location">
    <subcellularLocation>
        <location evidence="1">Cytoplasm</location>
    </subcellularLocation>
</comment>
<comment type="similarity">
    <text evidence="1">Belongs to the UMP kinase family.</text>
</comment>
<accession>A3M658</accession>
<evidence type="ECO:0000255" key="1">
    <source>
        <dbReference type="HAMAP-Rule" id="MF_01220"/>
    </source>
</evidence>
<feature type="chain" id="PRO_0000323778" description="Uridylate kinase">
    <location>
        <begin position="1"/>
        <end position="242"/>
    </location>
</feature>
<feature type="binding site" evidence="1">
    <location>
        <begin position="15"/>
        <end position="18"/>
    </location>
    <ligand>
        <name>ATP</name>
        <dbReference type="ChEBI" id="CHEBI:30616"/>
    </ligand>
</feature>
<feature type="binding site" evidence="1">
    <location>
        <position position="57"/>
    </location>
    <ligand>
        <name>UMP</name>
        <dbReference type="ChEBI" id="CHEBI:57865"/>
    </ligand>
</feature>
<feature type="binding site" evidence="1">
    <location>
        <position position="58"/>
    </location>
    <ligand>
        <name>ATP</name>
        <dbReference type="ChEBI" id="CHEBI:30616"/>
    </ligand>
</feature>
<feature type="binding site" evidence="1">
    <location>
        <position position="62"/>
    </location>
    <ligand>
        <name>ATP</name>
        <dbReference type="ChEBI" id="CHEBI:30616"/>
    </ligand>
</feature>
<feature type="binding site" evidence="1">
    <location>
        <position position="78"/>
    </location>
    <ligand>
        <name>UMP</name>
        <dbReference type="ChEBI" id="CHEBI:57865"/>
    </ligand>
</feature>
<feature type="binding site" evidence="1">
    <location>
        <begin position="139"/>
        <end position="146"/>
    </location>
    <ligand>
        <name>UMP</name>
        <dbReference type="ChEBI" id="CHEBI:57865"/>
    </ligand>
</feature>
<feature type="binding site" evidence="1">
    <location>
        <position position="166"/>
    </location>
    <ligand>
        <name>ATP</name>
        <dbReference type="ChEBI" id="CHEBI:30616"/>
    </ligand>
</feature>
<feature type="binding site" evidence="1">
    <location>
        <position position="172"/>
    </location>
    <ligand>
        <name>ATP</name>
        <dbReference type="ChEBI" id="CHEBI:30616"/>
    </ligand>
</feature>
<feature type="binding site" evidence="1">
    <location>
        <position position="175"/>
    </location>
    <ligand>
        <name>ATP</name>
        <dbReference type="ChEBI" id="CHEBI:30616"/>
    </ligand>
</feature>
<gene>
    <name evidence="1" type="primary">pyrH</name>
    <name type="ordered locus">A1S_1975</name>
</gene>
<name>PYRH_ACIBT</name>
<proteinExistence type="inferred from homology"/>
<keyword id="KW-0067">ATP-binding</keyword>
<keyword id="KW-0963">Cytoplasm</keyword>
<keyword id="KW-0418">Kinase</keyword>
<keyword id="KW-0547">Nucleotide-binding</keyword>
<keyword id="KW-0665">Pyrimidine biosynthesis</keyword>
<keyword id="KW-0808">Transferase</keyword>
<reference key="1">
    <citation type="journal article" date="2007" name="Genes Dev.">
        <title>New insights into Acinetobacter baumannii pathogenesis revealed by high-density pyrosequencing and transposon mutagenesis.</title>
        <authorList>
            <person name="Smith M.G."/>
            <person name="Gianoulis T.A."/>
            <person name="Pukatzki S."/>
            <person name="Mekalanos J.J."/>
            <person name="Ornston L.N."/>
            <person name="Gerstein M."/>
            <person name="Snyder M."/>
        </authorList>
    </citation>
    <scope>NUCLEOTIDE SEQUENCE [LARGE SCALE GENOMIC DNA]</scope>
    <source>
        <strain>ATCC 17978 / DSM 105126 / CIP 53.77 / LMG 1025 / NCDC KC755 / 5377</strain>
    </source>
</reference>
<dbReference type="EC" id="2.7.4.22" evidence="1"/>
<dbReference type="EMBL" id="CP000521">
    <property type="protein sequence ID" value="ABO12402.2"/>
    <property type="molecule type" value="Genomic_DNA"/>
</dbReference>
<dbReference type="RefSeq" id="WP_000852257.1">
    <property type="nucleotide sequence ID" value="NZ_CP053098.1"/>
</dbReference>
<dbReference type="SMR" id="A3M658"/>
<dbReference type="GeneID" id="92894237"/>
<dbReference type="KEGG" id="acb:A1S_1975"/>
<dbReference type="HOGENOM" id="CLU_033861_0_0_6"/>
<dbReference type="UniPathway" id="UPA00159">
    <property type="reaction ID" value="UER00275"/>
</dbReference>
<dbReference type="GO" id="GO:0005829">
    <property type="term" value="C:cytosol"/>
    <property type="evidence" value="ECO:0007669"/>
    <property type="project" value="TreeGrafter"/>
</dbReference>
<dbReference type="GO" id="GO:0005524">
    <property type="term" value="F:ATP binding"/>
    <property type="evidence" value="ECO:0007669"/>
    <property type="project" value="UniProtKB-KW"/>
</dbReference>
<dbReference type="GO" id="GO:0033862">
    <property type="term" value="F:UMP kinase activity"/>
    <property type="evidence" value="ECO:0007669"/>
    <property type="project" value="UniProtKB-EC"/>
</dbReference>
<dbReference type="GO" id="GO:0044210">
    <property type="term" value="P:'de novo' CTP biosynthetic process"/>
    <property type="evidence" value="ECO:0007669"/>
    <property type="project" value="UniProtKB-UniRule"/>
</dbReference>
<dbReference type="GO" id="GO:0006225">
    <property type="term" value="P:UDP biosynthetic process"/>
    <property type="evidence" value="ECO:0007669"/>
    <property type="project" value="TreeGrafter"/>
</dbReference>
<dbReference type="CDD" id="cd04254">
    <property type="entry name" value="AAK_UMPK-PyrH-Ec"/>
    <property type="match status" value="1"/>
</dbReference>
<dbReference type="FunFam" id="3.40.1160.10:FF:000001">
    <property type="entry name" value="Uridylate kinase"/>
    <property type="match status" value="1"/>
</dbReference>
<dbReference type="Gene3D" id="3.40.1160.10">
    <property type="entry name" value="Acetylglutamate kinase-like"/>
    <property type="match status" value="1"/>
</dbReference>
<dbReference type="HAMAP" id="MF_01220_B">
    <property type="entry name" value="PyrH_B"/>
    <property type="match status" value="1"/>
</dbReference>
<dbReference type="InterPro" id="IPR036393">
    <property type="entry name" value="AceGlu_kinase-like_sf"/>
</dbReference>
<dbReference type="InterPro" id="IPR001048">
    <property type="entry name" value="Asp/Glu/Uridylate_kinase"/>
</dbReference>
<dbReference type="InterPro" id="IPR011817">
    <property type="entry name" value="Uridylate_kinase"/>
</dbReference>
<dbReference type="InterPro" id="IPR015963">
    <property type="entry name" value="Uridylate_kinase_bac"/>
</dbReference>
<dbReference type="NCBIfam" id="TIGR02075">
    <property type="entry name" value="pyrH_bact"/>
    <property type="match status" value="1"/>
</dbReference>
<dbReference type="PANTHER" id="PTHR42833">
    <property type="entry name" value="URIDYLATE KINASE"/>
    <property type="match status" value="1"/>
</dbReference>
<dbReference type="PANTHER" id="PTHR42833:SF4">
    <property type="entry name" value="URIDYLATE KINASE PUMPKIN, CHLOROPLASTIC"/>
    <property type="match status" value="1"/>
</dbReference>
<dbReference type="Pfam" id="PF00696">
    <property type="entry name" value="AA_kinase"/>
    <property type="match status" value="1"/>
</dbReference>
<dbReference type="PIRSF" id="PIRSF005650">
    <property type="entry name" value="Uridylate_kin"/>
    <property type="match status" value="1"/>
</dbReference>
<dbReference type="SUPFAM" id="SSF53633">
    <property type="entry name" value="Carbamate kinase-like"/>
    <property type="match status" value="1"/>
</dbReference>